<reference key="1">
    <citation type="journal article" date="2011" name="PLoS Pathog.">
        <title>Comparative genomics yields insights into niche adaptation of plant vascular wilt pathogens.</title>
        <authorList>
            <person name="Klosterman S.J."/>
            <person name="Subbarao K.V."/>
            <person name="Kang S."/>
            <person name="Veronese P."/>
            <person name="Gold S.E."/>
            <person name="Thomma B.P.H.J."/>
            <person name="Chen Z."/>
            <person name="Henrissat B."/>
            <person name="Lee Y.-H."/>
            <person name="Park J."/>
            <person name="Garcia-Pedrajas M.D."/>
            <person name="Barbara D.J."/>
            <person name="Anchieta A."/>
            <person name="de Jonge R."/>
            <person name="Santhanam P."/>
            <person name="Maruthachalam K."/>
            <person name="Atallah Z."/>
            <person name="Amyotte S.G."/>
            <person name="Paz Z."/>
            <person name="Inderbitzin P."/>
            <person name="Hayes R.J."/>
            <person name="Heiman D.I."/>
            <person name="Young S."/>
            <person name="Zeng Q."/>
            <person name="Engels R."/>
            <person name="Galagan J."/>
            <person name="Cuomo C.A."/>
            <person name="Dobinson K.F."/>
            <person name="Ma L.-J."/>
        </authorList>
    </citation>
    <scope>NUCLEOTIDE SEQUENCE [LARGE SCALE GENOMIC DNA]</scope>
    <source>
        <strain>VaMs.102 / ATCC MYA-4576 / FGSC 10136</strain>
    </source>
</reference>
<gene>
    <name type="ORF">VDBG_06923</name>
</gene>
<proteinExistence type="inferred from homology"/>
<accession>C9SPU8</accession>
<protein>
    <recommendedName>
        <fullName>Probable zinc metalloprotease VDBG_06923</fullName>
        <ecNumber>3.4.-.-</ecNumber>
    </recommendedName>
</protein>
<organism>
    <name type="scientific">Verticillium alfalfae (strain VaMs.102 / ATCC MYA-4576 / FGSC 10136)</name>
    <name type="common">Verticillium wilt of alfalfa</name>
    <name type="synonym">Verticillium albo-atrum</name>
    <dbReference type="NCBI Taxonomy" id="526221"/>
    <lineage>
        <taxon>Eukaryota</taxon>
        <taxon>Fungi</taxon>
        <taxon>Dikarya</taxon>
        <taxon>Ascomycota</taxon>
        <taxon>Pezizomycotina</taxon>
        <taxon>Sordariomycetes</taxon>
        <taxon>Hypocreomycetidae</taxon>
        <taxon>Glomerellales</taxon>
        <taxon>Plectosphaerellaceae</taxon>
        <taxon>Verticillium</taxon>
    </lineage>
</organism>
<name>M28P3_VERA1</name>
<sequence>MNYEAEQPGANDDASGVAVALELARVLAKRKPAATIVFAAVAGEEQGLLGAQFMAQTFKNASVNVEGMLNVDLVGSSVGSRGEKEPNTVRLFCQGPPLTETPAQASQRLSIGGENDSPARQLGRFITEVAANKFTDMRVAMIYRLDRFLRGGDHRPFLEAGYAAVRFTEPNENFDHQHQDTRVEDGVQYGDLPEFLDYEYIARVAKVDLAAMWSLANAPAKVNNVRVNGTWLSNDSQLFWDPVNSTNLAGYEVVWRPTDAPLWTHALFVGDVRTATVELSKDNVIFGVRSVGKNGYKSPVTIPFPT</sequence>
<evidence type="ECO:0000250" key="1"/>
<evidence type="ECO:0000255" key="2"/>
<evidence type="ECO:0000255" key="3">
    <source>
        <dbReference type="PROSITE-ProRule" id="PRU00316"/>
    </source>
</evidence>
<evidence type="ECO:0000305" key="4"/>
<comment type="cofactor">
    <cofactor evidence="1">
        <name>Zn(2+)</name>
        <dbReference type="ChEBI" id="CHEBI:29105"/>
    </cofactor>
    <text evidence="1">Binds 2 Zn(2+) ions per subunit.</text>
</comment>
<comment type="subcellular location">
    <subcellularLocation>
        <location evidence="4">Secreted</location>
    </subcellularLocation>
</comment>
<comment type="similarity">
    <text evidence="4">Belongs to the peptidase M28 family. M28B subfamily.</text>
</comment>
<dbReference type="EC" id="3.4.-.-"/>
<dbReference type="EMBL" id="DS985221">
    <property type="protein sequence ID" value="EEY20813.1"/>
    <property type="molecule type" value="Genomic_DNA"/>
</dbReference>
<dbReference type="RefSeq" id="XP_003003361.1">
    <property type="nucleotide sequence ID" value="XM_003003315.1"/>
</dbReference>
<dbReference type="SMR" id="C9SPU8"/>
<dbReference type="GeneID" id="9537574"/>
<dbReference type="KEGG" id="val:VDBG_06923"/>
<dbReference type="eggNOG" id="ENOG502R701">
    <property type="taxonomic scope" value="Eukaryota"/>
</dbReference>
<dbReference type="HOGENOM" id="CLU_047420_0_0_1"/>
<dbReference type="OMA" id="MEPLSIW"/>
<dbReference type="OrthoDB" id="10013407at2759"/>
<dbReference type="Proteomes" id="UP000008698">
    <property type="component" value="Unassembled WGS sequence"/>
</dbReference>
<dbReference type="GO" id="GO:0005576">
    <property type="term" value="C:extracellular region"/>
    <property type="evidence" value="ECO:0007669"/>
    <property type="project" value="UniProtKB-SubCell"/>
</dbReference>
<dbReference type="GO" id="GO:0046872">
    <property type="term" value="F:metal ion binding"/>
    <property type="evidence" value="ECO:0007669"/>
    <property type="project" value="UniProtKB-KW"/>
</dbReference>
<dbReference type="GO" id="GO:0008235">
    <property type="term" value="F:metalloexopeptidase activity"/>
    <property type="evidence" value="ECO:0007669"/>
    <property type="project" value="InterPro"/>
</dbReference>
<dbReference type="GO" id="GO:0006508">
    <property type="term" value="P:proteolysis"/>
    <property type="evidence" value="ECO:0007669"/>
    <property type="project" value="UniProtKB-KW"/>
</dbReference>
<dbReference type="Gene3D" id="3.40.630.10">
    <property type="entry name" value="Zn peptidases"/>
    <property type="match status" value="1"/>
</dbReference>
<dbReference type="InterPro" id="IPR003961">
    <property type="entry name" value="FN3_dom"/>
</dbReference>
<dbReference type="InterPro" id="IPR036116">
    <property type="entry name" value="FN3_sf"/>
</dbReference>
<dbReference type="InterPro" id="IPR045175">
    <property type="entry name" value="M28_fam"/>
</dbReference>
<dbReference type="InterPro" id="IPR007484">
    <property type="entry name" value="Peptidase_M28"/>
</dbReference>
<dbReference type="PANTHER" id="PTHR12147">
    <property type="entry name" value="METALLOPEPTIDASE M28 FAMILY MEMBER"/>
    <property type="match status" value="1"/>
</dbReference>
<dbReference type="PANTHER" id="PTHR12147:SF26">
    <property type="entry name" value="PEPTIDASE M28 DOMAIN-CONTAINING PROTEIN"/>
    <property type="match status" value="1"/>
</dbReference>
<dbReference type="Pfam" id="PF04389">
    <property type="entry name" value="Peptidase_M28"/>
    <property type="match status" value="1"/>
</dbReference>
<dbReference type="SUPFAM" id="SSF49265">
    <property type="entry name" value="Fibronectin type III"/>
    <property type="match status" value="1"/>
</dbReference>
<dbReference type="SUPFAM" id="SSF53187">
    <property type="entry name" value="Zn-dependent exopeptidases"/>
    <property type="match status" value="1"/>
</dbReference>
<dbReference type="PROSITE" id="PS50853">
    <property type="entry name" value="FN3"/>
    <property type="match status" value="1"/>
</dbReference>
<keyword id="KW-0325">Glycoprotein</keyword>
<keyword id="KW-0378">Hydrolase</keyword>
<keyword id="KW-0479">Metal-binding</keyword>
<keyword id="KW-0482">Metalloprotease</keyword>
<keyword id="KW-0645">Protease</keyword>
<keyword id="KW-1185">Reference proteome</keyword>
<keyword id="KW-0964">Secreted</keyword>
<keyword id="KW-0732">Signal</keyword>
<keyword id="KW-0862">Zinc</keyword>
<feature type="signal peptide" evidence="2">
    <location>
        <begin position="1"/>
        <end position="28"/>
    </location>
</feature>
<feature type="chain" id="PRO_0000411769" description="Probable zinc metalloprotease VDBG_06923">
    <location>
        <begin position="29"/>
        <end position="306"/>
    </location>
</feature>
<feature type="domain" description="Fibronectin type-III" evidence="3">
    <location>
        <begin position="218"/>
        <end position="306"/>
    </location>
</feature>
<feature type="binding site" evidence="1">
    <location>
        <position position="12"/>
    </location>
    <ligand>
        <name>Zn(2+)</name>
        <dbReference type="ChEBI" id="CHEBI:29105"/>
        <label>1</label>
    </ligand>
</feature>
<feature type="binding site" evidence="1">
    <location>
        <position position="12"/>
    </location>
    <ligand>
        <name>Zn(2+)</name>
        <dbReference type="ChEBI" id="CHEBI:29105"/>
        <label>2</label>
        <note>catalytic</note>
    </ligand>
</feature>
<feature type="binding site" evidence="1">
    <location>
        <position position="45"/>
    </location>
    <ligand>
        <name>Zn(2+)</name>
        <dbReference type="ChEBI" id="CHEBI:29105"/>
        <label>2</label>
        <note>catalytic</note>
    </ligand>
</feature>
<feature type="binding site" evidence="1">
    <location>
        <position position="72"/>
    </location>
    <ligand>
        <name>Zn(2+)</name>
        <dbReference type="ChEBI" id="CHEBI:29105"/>
        <label>1</label>
    </ligand>
</feature>
<feature type="glycosylation site" description="N-linked (GlcNAc...) asparagine" evidence="2">
    <location>
        <position position="60"/>
    </location>
</feature>
<feature type="glycosylation site" description="N-linked (GlcNAc...) asparagine" evidence="2">
    <location>
        <position position="228"/>
    </location>
</feature>
<feature type="glycosylation site" description="N-linked (GlcNAc...) asparagine" evidence="2">
    <location>
        <position position="234"/>
    </location>
</feature>
<feature type="glycosylation site" description="N-linked (GlcNAc...) asparagine" evidence="2">
    <location>
        <position position="244"/>
    </location>
</feature>